<comment type="function">
    <text evidence="4 5 6">Possesses beta-glucosidase activity toward 4-methyl-umbelliferyl-beta-D-glucoside in vitro. Possesses myrosinase activity toward indol-3-yl-methylglucosinolate (I3M) and 4-methoxy-indol-3-yl-methylglucosinolate (4MO-I3M) in vivo (PubMed:19095900). Component of an inducible preinvasion resistance mechanism that prevents penetration of the nonhost fungal species B.graminis and E.pisi (PubMed:16293760). Involved in indole glucosinolate (IGS) activation during pattern-triggered immunity (PTI). Functions as a myrosinase for the breakdown of flg22-triggered IGS. Required for both callose deposition and glucosinolate activation during pathogen-triggered resistance (PubMed:19095898). During fungal attack, required for IGS activation that mediates broad-spectrum antifungal defense (PubMed:19095900).</text>
</comment>
<comment type="catalytic activity">
    <reaction evidence="6">
        <text>Hydrolysis of terminal, non-reducing beta-D-glucosyl residues with release of beta-D-glucose.</text>
        <dbReference type="EC" id="3.2.1.21"/>
    </reaction>
</comment>
<comment type="biophysicochemical properties">
    <kinetics>
        <KM evidence="6">722 uM for indol-3-yl-methylglucosinolate</KM>
        <KM evidence="6">150 uM for 4-methyl-umbelliferyl-beta-D-glucoside</KM>
        <Vmax evidence="6">7.5 umol/min/mg enzyme with indol-3-yl-methylglucosinolate as substrate</Vmax>
        <Vmax evidence="6">0.76 umol/min/mg enzyme with 4-methyl-umbelliferyl-beta-D-glucoside as substrate</Vmax>
    </kinetics>
    <phDependence>
        <text evidence="6">Optimum pH is 6.0.</text>
    </phDependence>
</comment>
<comment type="subcellular location">
    <subcellularLocation>
        <location evidence="4">Peroxisome</location>
    </subcellularLocation>
</comment>
<comment type="similarity">
    <text evidence="9">Belongs to the glycosyl hydrolase 1 family.</text>
</comment>
<keyword id="KW-0326">Glycosidase</keyword>
<keyword id="KW-0378">Hydrolase</keyword>
<keyword id="KW-0576">Peroxisome</keyword>
<keyword id="KW-0611">Plant defense</keyword>
<keyword id="KW-1185">Reference proteome</keyword>
<name>BGL26_ARATH</name>
<sequence length="560" mass="63916">MAHLQRTFPTEMSKGRASFPKGFLFGTASSSYQYEGAVNEGARGQSVWDHFSNRFPHRISDSSDGNVAVDFYHRYKEDIKRMKDINMDSFRLSIAWPRVLPYGKRDRGVSEEGIKFYNDVIDELLANEITPLVTIFHWDIPQDLEDEYGGFLSEQIIDDFRDYASLCFERFGDRVSLWCTMNEPWVYSVAGYDTGRKAPGRCSKYVNGASVAGMSGYEAYIVSHNMLLAHAEAVEVFRKCDHIKNGQIGIAHNPLWYEPYDPSDPDDVEGCNRAMDFMLGWHQHPTACGDYPETMKKSVGDRLPSFTPEQSKKLIGSCDYVGINYYSSLFVKSIKHVDPTQPTWRTDQGVDWMKTNIDGKQIAKQGGSEWSFTYPTGLRNILKYVKKTYGNPPILITENGYGEVAEQSQSLYMYNPSIDTERLEYIEGHIHAIHQAIHEDGVRVEGYYVWSLLDNFEWNSGYGVRYGLYYIDYKDGLRRYPKMSALWLKEFLRFDQEDDSSTSKKEEKKESYGKQLLHSVQDSQFVHSIKDSGALPAVLGSLFVVSATVGTSLFFKGANN</sequence>
<evidence type="ECO:0000250" key="1">
    <source>
        <dbReference type="UniProtKB" id="P49235"/>
    </source>
</evidence>
<evidence type="ECO:0000250" key="2">
    <source>
        <dbReference type="UniProtKB" id="Q7XSK0"/>
    </source>
</evidence>
<evidence type="ECO:0000250" key="3">
    <source>
        <dbReference type="UniProtKB" id="Q9SPP9"/>
    </source>
</evidence>
<evidence type="ECO:0000269" key="4">
    <source>
    </source>
</evidence>
<evidence type="ECO:0000269" key="5">
    <source>
    </source>
</evidence>
<evidence type="ECO:0000269" key="6">
    <source>
    </source>
</evidence>
<evidence type="ECO:0000303" key="7">
    <source>
    </source>
</evidence>
<evidence type="ECO:0000303" key="8">
    <source>
    </source>
</evidence>
<evidence type="ECO:0000305" key="9"/>
<evidence type="ECO:0000312" key="10">
    <source>
        <dbReference type="Araport" id="AT2G44490"/>
    </source>
</evidence>
<evidence type="ECO:0000312" key="11">
    <source>
        <dbReference type="EMBL" id="AAC16095.1"/>
    </source>
</evidence>
<feature type="chain" id="PRO_0000389588" description="Beta-glucosidase 26, peroxisomal">
    <location>
        <begin position="1"/>
        <end position="560"/>
    </location>
</feature>
<feature type="active site" description="Proton donor" evidence="2">
    <location>
        <position position="183"/>
    </location>
</feature>
<feature type="active site" description="Nucleophile" evidence="2">
    <location>
        <position position="398"/>
    </location>
</feature>
<feature type="binding site" evidence="2">
    <location>
        <position position="33"/>
    </location>
    <ligand>
        <name>a beta-D-glucoside</name>
        <dbReference type="ChEBI" id="CHEBI:22798"/>
    </ligand>
</feature>
<feature type="binding site" evidence="2">
    <location>
        <position position="137"/>
    </location>
    <ligand>
        <name>a beta-D-glucoside</name>
        <dbReference type="ChEBI" id="CHEBI:22798"/>
    </ligand>
</feature>
<feature type="binding site" evidence="2">
    <location>
        <begin position="182"/>
        <end position="183"/>
    </location>
    <ligand>
        <name>a beta-D-glucoside</name>
        <dbReference type="ChEBI" id="CHEBI:22798"/>
    </ligand>
</feature>
<feature type="binding site" evidence="2">
    <location>
        <position position="326"/>
    </location>
    <ligand>
        <name>a beta-D-glucoside</name>
        <dbReference type="ChEBI" id="CHEBI:22798"/>
    </ligand>
</feature>
<feature type="binding site" evidence="3">
    <location>
        <position position="398"/>
    </location>
    <ligand>
        <name>a beta-D-glucoside</name>
        <dbReference type="ChEBI" id="CHEBI:22798"/>
    </ligand>
</feature>
<feature type="binding site" evidence="2">
    <location>
        <position position="450"/>
    </location>
    <ligand>
        <name>a beta-D-glucoside</name>
        <dbReference type="ChEBI" id="CHEBI:22798"/>
    </ligand>
</feature>
<feature type="binding site" evidence="2">
    <location>
        <begin position="457"/>
        <end position="458"/>
    </location>
    <ligand>
        <name>a beta-D-glucoside</name>
        <dbReference type="ChEBI" id="CHEBI:22798"/>
    </ligand>
</feature>
<feature type="binding site" evidence="1">
    <location>
        <position position="466"/>
    </location>
    <ligand>
        <name>a beta-D-glucoside</name>
        <dbReference type="ChEBI" id="CHEBI:22798"/>
    </ligand>
</feature>
<feature type="mutagenesis site" description="Susceptibility to the nonhost powdery mildew species B.graminis and E.pisi. Loss of myrosinase activity but intact glucosidase activity." evidence="4 6">
    <original>E</original>
    <variation>D</variation>
    <location>
        <position position="183"/>
    </location>
</feature>
<reference key="1">
    <citation type="journal article" date="1999" name="Nature">
        <title>Sequence and analysis of chromosome 2 of the plant Arabidopsis thaliana.</title>
        <authorList>
            <person name="Lin X."/>
            <person name="Kaul S."/>
            <person name="Rounsley S.D."/>
            <person name="Shea T.P."/>
            <person name="Benito M.-I."/>
            <person name="Town C.D."/>
            <person name="Fujii C.Y."/>
            <person name="Mason T.M."/>
            <person name="Bowman C.L."/>
            <person name="Barnstead M.E."/>
            <person name="Feldblyum T.V."/>
            <person name="Buell C.R."/>
            <person name="Ketchum K.A."/>
            <person name="Lee J.J."/>
            <person name="Ronning C.M."/>
            <person name="Koo H.L."/>
            <person name="Moffat K.S."/>
            <person name="Cronin L.A."/>
            <person name="Shen M."/>
            <person name="Pai G."/>
            <person name="Van Aken S."/>
            <person name="Umayam L."/>
            <person name="Tallon L.J."/>
            <person name="Gill J.E."/>
            <person name="Adams M.D."/>
            <person name="Carrera A.J."/>
            <person name="Creasy T.H."/>
            <person name="Goodman H.M."/>
            <person name="Somerville C.R."/>
            <person name="Copenhaver G.P."/>
            <person name="Preuss D."/>
            <person name="Nierman W.C."/>
            <person name="White O."/>
            <person name="Eisen J.A."/>
            <person name="Salzberg S.L."/>
            <person name="Fraser C.M."/>
            <person name="Venter J.C."/>
        </authorList>
    </citation>
    <scope>NUCLEOTIDE SEQUENCE [LARGE SCALE GENOMIC DNA]</scope>
    <source>
        <strain>cv. Columbia</strain>
    </source>
</reference>
<reference key="2">
    <citation type="journal article" date="2017" name="Plant J.">
        <title>Araport11: a complete reannotation of the Arabidopsis thaliana reference genome.</title>
        <authorList>
            <person name="Cheng C.Y."/>
            <person name="Krishnakumar V."/>
            <person name="Chan A.P."/>
            <person name="Thibaud-Nissen F."/>
            <person name="Schobel S."/>
            <person name="Town C.D."/>
        </authorList>
    </citation>
    <scope>GENOME REANNOTATION</scope>
    <source>
        <strain>cv. Columbia</strain>
    </source>
</reference>
<reference key="3">
    <citation type="journal article" date="2003" name="Science">
        <title>Empirical analysis of transcriptional activity in the Arabidopsis genome.</title>
        <authorList>
            <person name="Yamada K."/>
            <person name="Lim J."/>
            <person name="Dale J.M."/>
            <person name="Chen H."/>
            <person name="Shinn P."/>
            <person name="Palm C.J."/>
            <person name="Southwick A.M."/>
            <person name="Wu H.C."/>
            <person name="Kim C.J."/>
            <person name="Nguyen M."/>
            <person name="Pham P.K."/>
            <person name="Cheuk R.F."/>
            <person name="Karlin-Newmann G."/>
            <person name="Liu S.X."/>
            <person name="Lam B."/>
            <person name="Sakano H."/>
            <person name="Wu T."/>
            <person name="Yu G."/>
            <person name="Miranda M."/>
            <person name="Quach H.L."/>
            <person name="Tripp M."/>
            <person name="Chang C.H."/>
            <person name="Lee J.M."/>
            <person name="Toriumi M.J."/>
            <person name="Chan M.M."/>
            <person name="Tang C.C."/>
            <person name="Onodera C.S."/>
            <person name="Deng J.M."/>
            <person name="Akiyama K."/>
            <person name="Ansari Y."/>
            <person name="Arakawa T."/>
            <person name="Banh J."/>
            <person name="Banno F."/>
            <person name="Bowser L."/>
            <person name="Brooks S.Y."/>
            <person name="Carninci P."/>
            <person name="Chao Q."/>
            <person name="Choy N."/>
            <person name="Enju A."/>
            <person name="Goldsmith A.D."/>
            <person name="Gurjal M."/>
            <person name="Hansen N.F."/>
            <person name="Hayashizaki Y."/>
            <person name="Johnson-Hopson C."/>
            <person name="Hsuan V.W."/>
            <person name="Iida K."/>
            <person name="Karnes M."/>
            <person name="Khan S."/>
            <person name="Koesema E."/>
            <person name="Ishida J."/>
            <person name="Jiang P.X."/>
            <person name="Jones T."/>
            <person name="Kawai J."/>
            <person name="Kamiya A."/>
            <person name="Meyers C."/>
            <person name="Nakajima M."/>
            <person name="Narusaka M."/>
            <person name="Seki M."/>
            <person name="Sakurai T."/>
            <person name="Satou M."/>
            <person name="Tamse R."/>
            <person name="Vaysberg M."/>
            <person name="Wallender E.K."/>
            <person name="Wong C."/>
            <person name="Yamamura Y."/>
            <person name="Yuan S."/>
            <person name="Shinozaki K."/>
            <person name="Davis R.W."/>
            <person name="Theologis A."/>
            <person name="Ecker J.R."/>
        </authorList>
    </citation>
    <scope>NUCLEOTIDE SEQUENCE [LARGE SCALE MRNA]</scope>
    <source>
        <strain>cv. Columbia</strain>
    </source>
</reference>
<reference key="4">
    <citation type="journal article" date="2004" name="Plant Mol. Biol.">
        <title>Functional genomic analysis of Arabidopsis thaliana glycoside hydrolase family 1.</title>
        <authorList>
            <person name="Xu Z."/>
            <person name="Escamilla-Trevino L.L."/>
            <person name="Zeng L."/>
            <person name="Lalgondar M."/>
            <person name="Bevan D.R."/>
            <person name="Winkel B.S.J."/>
            <person name="Mohamed A."/>
            <person name="Cheng C.-L."/>
            <person name="Shih M.-C."/>
            <person name="Poulton J.E."/>
            <person name="Esen A."/>
        </authorList>
    </citation>
    <scope>GENE FAMILY</scope>
    <scope>NOMENCLATURE</scope>
</reference>
<reference key="5">
    <citation type="journal article" date="2005" name="Science">
        <title>Pre- and postinvasion defenses both contribute to nonhost resistance in Arabidopsis.</title>
        <authorList>
            <person name="Lipka V."/>
            <person name="Dittgen J."/>
            <person name="Bednarek P."/>
            <person name="Bhat R."/>
            <person name="Wiermer M."/>
            <person name="Stein M."/>
            <person name="Landtag J."/>
            <person name="Brandt W."/>
            <person name="Rosahl S."/>
            <person name="Scheel D."/>
            <person name="Llorente F."/>
            <person name="Molina A."/>
            <person name="Parker J."/>
            <person name="Somerville S."/>
            <person name="Schulze-Lefert P."/>
        </authorList>
    </citation>
    <scope>FUNCTION</scope>
    <scope>SUBCELLULAR LOCATION</scope>
    <scope>MUTAGENESIS OF GLU-183</scope>
</reference>
<reference key="6">
    <citation type="journal article" date="2009" name="Science">
        <title>Glucosinolate metabolites required for an Arabidopsis innate immune response.</title>
        <authorList>
            <person name="Clay N.K."/>
            <person name="Adio A.M."/>
            <person name="Denoux C."/>
            <person name="Jander G."/>
            <person name="Ausubel F.M."/>
        </authorList>
    </citation>
    <scope>FUNCTION</scope>
</reference>
<reference key="7">
    <citation type="journal article" date="2009" name="Science">
        <title>A glucosinolate metabolism pathway in living plant cells mediates broad-spectrum antifungal defense.</title>
        <authorList>
            <person name="Bednarek P."/>
            <person name="Pislewska-Bednarek M."/>
            <person name="Svatos A."/>
            <person name="Schneider B."/>
            <person name="Doubsky J."/>
            <person name="Mansurova M."/>
            <person name="Humphry M."/>
            <person name="Consonni C."/>
            <person name="Panstruga R."/>
            <person name="Sanchez-Vallet A."/>
            <person name="Molina A."/>
            <person name="Schulze-Lefert P."/>
        </authorList>
    </citation>
    <scope>FUNCTION</scope>
    <scope>CATALYTIC ACTIVITY</scope>
    <scope>BIOPHYSICOCHEMICAL PROPERTIES</scope>
    <scope>MUTAGENESIS OF GLU-183</scope>
</reference>
<accession>O64883</accession>
<organism>
    <name type="scientific">Arabidopsis thaliana</name>
    <name type="common">Mouse-ear cress</name>
    <dbReference type="NCBI Taxonomy" id="3702"/>
    <lineage>
        <taxon>Eukaryota</taxon>
        <taxon>Viridiplantae</taxon>
        <taxon>Streptophyta</taxon>
        <taxon>Embryophyta</taxon>
        <taxon>Tracheophyta</taxon>
        <taxon>Spermatophyta</taxon>
        <taxon>Magnoliopsida</taxon>
        <taxon>eudicotyledons</taxon>
        <taxon>Gunneridae</taxon>
        <taxon>Pentapetalae</taxon>
        <taxon>rosids</taxon>
        <taxon>malvids</taxon>
        <taxon>Brassicales</taxon>
        <taxon>Brassicaceae</taxon>
        <taxon>Camelineae</taxon>
        <taxon>Arabidopsis</taxon>
    </lineage>
</organism>
<dbReference type="EC" id="3.2.1.21" evidence="6"/>
<dbReference type="EMBL" id="AC004521">
    <property type="protein sequence ID" value="AAC16095.1"/>
    <property type="molecule type" value="Genomic_DNA"/>
</dbReference>
<dbReference type="EMBL" id="CP002685">
    <property type="protein sequence ID" value="AEC10428.1"/>
    <property type="molecule type" value="Genomic_DNA"/>
</dbReference>
<dbReference type="EMBL" id="AY091016">
    <property type="protein sequence ID" value="AAM14038.1"/>
    <property type="molecule type" value="mRNA"/>
</dbReference>
<dbReference type="EMBL" id="BT000990">
    <property type="protein sequence ID" value="AAN41390.1"/>
    <property type="molecule type" value="mRNA"/>
</dbReference>
<dbReference type="PIR" id="T02404">
    <property type="entry name" value="T02404"/>
</dbReference>
<dbReference type="RefSeq" id="NP_181977.1">
    <property type="nucleotide sequence ID" value="NM_130012.4"/>
</dbReference>
<dbReference type="SMR" id="O64883"/>
<dbReference type="BioGRID" id="4392">
    <property type="interactions" value="4"/>
</dbReference>
<dbReference type="FunCoup" id="O64883">
    <property type="interactions" value="267"/>
</dbReference>
<dbReference type="IntAct" id="O64883">
    <property type="interactions" value="3"/>
</dbReference>
<dbReference type="STRING" id="3702.O64883"/>
<dbReference type="CAZy" id="GH1">
    <property type="family name" value="Glycoside Hydrolase Family 1"/>
</dbReference>
<dbReference type="PaxDb" id="3702-AT2G44490.1"/>
<dbReference type="ProteomicsDB" id="241213"/>
<dbReference type="EnsemblPlants" id="AT2G44490.1">
    <property type="protein sequence ID" value="AT2G44490.1"/>
    <property type="gene ID" value="AT2G44490"/>
</dbReference>
<dbReference type="GeneID" id="819056"/>
<dbReference type="Gramene" id="AT2G44490.1">
    <property type="protein sequence ID" value="AT2G44490.1"/>
    <property type="gene ID" value="AT2G44490"/>
</dbReference>
<dbReference type="KEGG" id="ath:AT2G44490"/>
<dbReference type="Araport" id="AT2G44490"/>
<dbReference type="TAIR" id="AT2G44490">
    <property type="gene designation" value="PEN2"/>
</dbReference>
<dbReference type="eggNOG" id="KOG0626">
    <property type="taxonomic scope" value="Eukaryota"/>
</dbReference>
<dbReference type="HOGENOM" id="CLU_001859_1_0_1"/>
<dbReference type="InParanoid" id="O64883"/>
<dbReference type="OMA" id="CTMNEPW"/>
<dbReference type="OrthoDB" id="65569at2759"/>
<dbReference type="PhylomeDB" id="O64883"/>
<dbReference type="BioCyc" id="MetaCyc:AT2G44490-MONOMER"/>
<dbReference type="BRENDA" id="3.2.1.147">
    <property type="organism ID" value="399"/>
</dbReference>
<dbReference type="PRO" id="PR:O64883"/>
<dbReference type="Proteomes" id="UP000006548">
    <property type="component" value="Chromosome 2"/>
</dbReference>
<dbReference type="ExpressionAtlas" id="O64883">
    <property type="expression patterns" value="baseline and differential"/>
</dbReference>
<dbReference type="GO" id="GO:0009941">
    <property type="term" value="C:chloroplast envelope"/>
    <property type="evidence" value="ECO:0007005"/>
    <property type="project" value="TAIR"/>
</dbReference>
<dbReference type="GO" id="GO:0016020">
    <property type="term" value="C:membrane"/>
    <property type="evidence" value="ECO:0000314"/>
    <property type="project" value="TAIR"/>
</dbReference>
<dbReference type="GO" id="GO:0005777">
    <property type="term" value="C:peroxisome"/>
    <property type="evidence" value="ECO:0000314"/>
    <property type="project" value="TAIR"/>
</dbReference>
<dbReference type="GO" id="GO:0008422">
    <property type="term" value="F:beta-glucosidase activity"/>
    <property type="evidence" value="ECO:0007669"/>
    <property type="project" value="UniProtKB-EC"/>
</dbReference>
<dbReference type="GO" id="GO:0019137">
    <property type="term" value="F:thioglucosidase activity"/>
    <property type="evidence" value="ECO:0000314"/>
    <property type="project" value="TAIR"/>
</dbReference>
<dbReference type="GO" id="GO:0005975">
    <property type="term" value="P:carbohydrate metabolic process"/>
    <property type="evidence" value="ECO:0007669"/>
    <property type="project" value="InterPro"/>
</dbReference>
<dbReference type="GO" id="GO:0052544">
    <property type="term" value="P:defense response by callose deposition in cell wall"/>
    <property type="evidence" value="ECO:0000315"/>
    <property type="project" value="TAIR"/>
</dbReference>
<dbReference type="GO" id="GO:0042742">
    <property type="term" value="P:defense response to bacterium"/>
    <property type="evidence" value="ECO:0000315"/>
    <property type="project" value="TAIR"/>
</dbReference>
<dbReference type="GO" id="GO:0050832">
    <property type="term" value="P:defense response to fungus"/>
    <property type="evidence" value="ECO:0000315"/>
    <property type="project" value="TAIR"/>
</dbReference>
<dbReference type="GO" id="GO:0019760">
    <property type="term" value="P:glucosinolate metabolic process"/>
    <property type="evidence" value="ECO:0000315"/>
    <property type="project" value="TAIR"/>
</dbReference>
<dbReference type="GO" id="GO:0042344">
    <property type="term" value="P:indole glucosinolate catabolic process"/>
    <property type="evidence" value="ECO:0000315"/>
    <property type="project" value="TAIR"/>
</dbReference>
<dbReference type="GO" id="GO:0009682">
    <property type="term" value="P:induced systemic resistance"/>
    <property type="evidence" value="ECO:0000315"/>
    <property type="project" value="TAIR"/>
</dbReference>
<dbReference type="GO" id="GO:0009617">
    <property type="term" value="P:response to bacterium"/>
    <property type="evidence" value="ECO:0000315"/>
    <property type="project" value="TAIR"/>
</dbReference>
<dbReference type="FunFam" id="3.20.20.80:FF:000022">
    <property type="entry name" value="Beta-glucosidase 11"/>
    <property type="match status" value="1"/>
</dbReference>
<dbReference type="Gene3D" id="3.20.20.80">
    <property type="entry name" value="Glycosidases"/>
    <property type="match status" value="1"/>
</dbReference>
<dbReference type="InterPro" id="IPR001360">
    <property type="entry name" value="Glyco_hydro_1"/>
</dbReference>
<dbReference type="InterPro" id="IPR033132">
    <property type="entry name" value="Glyco_hydro_1_N_CS"/>
</dbReference>
<dbReference type="InterPro" id="IPR017853">
    <property type="entry name" value="Glycoside_hydrolase_SF"/>
</dbReference>
<dbReference type="PANTHER" id="PTHR10353:SF226">
    <property type="entry name" value="BETA-GLUCOSIDASE 26, PEROXISOMAL"/>
    <property type="match status" value="1"/>
</dbReference>
<dbReference type="PANTHER" id="PTHR10353">
    <property type="entry name" value="GLYCOSYL HYDROLASE"/>
    <property type="match status" value="1"/>
</dbReference>
<dbReference type="Pfam" id="PF00232">
    <property type="entry name" value="Glyco_hydro_1"/>
    <property type="match status" value="1"/>
</dbReference>
<dbReference type="PRINTS" id="PR00131">
    <property type="entry name" value="GLHYDRLASE1"/>
</dbReference>
<dbReference type="SUPFAM" id="SSF51445">
    <property type="entry name" value="(Trans)glycosidases"/>
    <property type="match status" value="1"/>
</dbReference>
<dbReference type="PROSITE" id="PS00653">
    <property type="entry name" value="GLYCOSYL_HYDROL_F1_2"/>
    <property type="match status" value="1"/>
</dbReference>
<proteinExistence type="evidence at protein level"/>
<protein>
    <recommendedName>
        <fullName evidence="7">Beta-glucosidase 26, peroxisomal</fullName>
        <shortName evidence="7">AtBGLU26</shortName>
        <ecNumber evidence="6">3.2.1.21</ecNumber>
    </recommendedName>
    <alternativeName>
        <fullName evidence="8">Protein PENETRATION 2</fullName>
    </alternativeName>
</protein>
<gene>
    <name evidence="7" type="primary">BGLU26</name>
    <name evidence="8" type="synonym">PEN2</name>
    <name evidence="10" type="ordered locus">At2g44490</name>
    <name evidence="11" type="ORF">F4I1.30</name>
</gene>